<reference key="1">
    <citation type="journal article" date="1993" name="Gene">
        <title>The nifH gene encoding the Fe protein component of the molybdenum nitrogenase from Azotobacter chroococcum.</title>
        <authorList>
            <person name="Jones R.L."/>
            <person name="Woodley P."/>
            <person name="Zinoni A.B."/>
            <person name="Robson R.L."/>
        </authorList>
    </citation>
    <scope>NUCLEOTIDE SEQUENCE [GENOMIC DNA]</scope>
</reference>
<organism>
    <name type="scientific">Azotobacter chroococcum mcd 1</name>
    <dbReference type="NCBI Taxonomy" id="355"/>
    <lineage>
        <taxon>Bacteria</taxon>
        <taxon>Pseudomonadati</taxon>
        <taxon>Pseudomonadota</taxon>
        <taxon>Gammaproteobacteria</taxon>
        <taxon>Pseudomonadales</taxon>
        <taxon>Pseudomonadaceae</taxon>
        <taxon>Azotobacter</taxon>
    </lineage>
</organism>
<sequence length="291" mass="31521">MAMRQCAIYGKGGIGKSTTTQNLVAALAEMGKKVMIVGCDPKADSTRLILHSKAQNTIMEMAAEAGTVEDLELEDVLKVGYGGVKCVESGGPEPGVGCAGRGVITAINFLEEEGAYEDDLDFVFYDVLGDVVCGGFAMPIRENKAQEIYIVCSGEMMAMYAANNISKGIVKYANSGSVRLGGLICNSRNTDREDELIIALAAKLGTQMIHFVPRDNVVQRAEIRRMTVIEYDPTAKQADEYRTLARKVVENKMLIIPNPITMDELEALLMEFGVMEEEDESIVGKAAAAEE</sequence>
<accession>P26248</accession>
<feature type="chain" id="PRO_0000139488" description="Nitrogenase iron protein 1">
    <location>
        <begin position="1"/>
        <end position="291"/>
    </location>
</feature>
<feature type="binding site" evidence="2">
    <location>
        <begin position="10"/>
        <end position="17"/>
    </location>
    <ligand>
        <name>ATP</name>
        <dbReference type="ChEBI" id="CHEBI:30616"/>
    </ligand>
</feature>
<feature type="binding site" evidence="1">
    <location>
        <position position="98"/>
    </location>
    <ligand>
        <name>[4Fe-4S] cluster</name>
        <dbReference type="ChEBI" id="CHEBI:49883"/>
        <note>ligand shared between dimeric partners</note>
    </ligand>
</feature>
<feature type="binding site" evidence="1">
    <location>
        <position position="133"/>
    </location>
    <ligand>
        <name>[4Fe-4S] cluster</name>
        <dbReference type="ChEBI" id="CHEBI:49883"/>
        <note>ligand shared between dimeric partners</note>
    </ligand>
</feature>
<feature type="modified residue" description="ADP-ribosylarginine; by dinitrogenase reductase ADP-ribosyltransferase" evidence="1">
    <location>
        <position position="101"/>
    </location>
</feature>
<evidence type="ECO:0000250" key="1"/>
<evidence type="ECO:0000255" key="2"/>
<evidence type="ECO:0000305" key="3"/>
<proteinExistence type="inferred from homology"/>
<gene>
    <name type="primary">nifH1</name>
    <name type="synonym">nifH</name>
</gene>
<dbReference type="EC" id="1.18.6.1"/>
<dbReference type="EMBL" id="M73020">
    <property type="protein sequence ID" value="AAA22140.1"/>
    <property type="status" value="ALT_SEQ"/>
    <property type="molecule type" value="Genomic_DNA"/>
</dbReference>
<dbReference type="PIR" id="JN0516">
    <property type="entry name" value="JN0516"/>
</dbReference>
<dbReference type="SMR" id="P26248"/>
<dbReference type="GO" id="GO:0051539">
    <property type="term" value="F:4 iron, 4 sulfur cluster binding"/>
    <property type="evidence" value="ECO:0007669"/>
    <property type="project" value="UniProtKB-KW"/>
</dbReference>
<dbReference type="GO" id="GO:0005524">
    <property type="term" value="F:ATP binding"/>
    <property type="evidence" value="ECO:0007669"/>
    <property type="project" value="UniProtKB-UniRule"/>
</dbReference>
<dbReference type="GO" id="GO:0046872">
    <property type="term" value="F:metal ion binding"/>
    <property type="evidence" value="ECO:0007669"/>
    <property type="project" value="UniProtKB-KW"/>
</dbReference>
<dbReference type="GO" id="GO:0016163">
    <property type="term" value="F:nitrogenase activity"/>
    <property type="evidence" value="ECO:0007669"/>
    <property type="project" value="UniProtKB-UniRule"/>
</dbReference>
<dbReference type="GO" id="GO:0009399">
    <property type="term" value="P:nitrogen fixation"/>
    <property type="evidence" value="ECO:0007669"/>
    <property type="project" value="UniProtKB-UniRule"/>
</dbReference>
<dbReference type="CDD" id="cd02040">
    <property type="entry name" value="NifH"/>
    <property type="match status" value="1"/>
</dbReference>
<dbReference type="FunFam" id="3.40.50.300:FF:001379">
    <property type="entry name" value="Nitrogenase iron protein 1"/>
    <property type="match status" value="1"/>
</dbReference>
<dbReference type="Gene3D" id="3.40.50.300">
    <property type="entry name" value="P-loop containing nucleotide triphosphate hydrolases"/>
    <property type="match status" value="1"/>
</dbReference>
<dbReference type="HAMAP" id="MF_00533">
    <property type="entry name" value="NifH"/>
    <property type="match status" value="1"/>
</dbReference>
<dbReference type="InterPro" id="IPR030655">
    <property type="entry name" value="NifH/chlL_CS"/>
</dbReference>
<dbReference type="InterPro" id="IPR000392">
    <property type="entry name" value="NifH/frxC"/>
</dbReference>
<dbReference type="InterPro" id="IPR005977">
    <property type="entry name" value="Nitrogenase_Fe_NifH"/>
</dbReference>
<dbReference type="InterPro" id="IPR027417">
    <property type="entry name" value="P-loop_NTPase"/>
</dbReference>
<dbReference type="NCBIfam" id="TIGR01287">
    <property type="entry name" value="nifH"/>
    <property type="match status" value="1"/>
</dbReference>
<dbReference type="PANTHER" id="PTHR42864">
    <property type="entry name" value="LIGHT-INDEPENDENT PROTOCHLOROPHYLLIDE REDUCTASE IRON-SULFUR ATP-BINDING PROTEIN"/>
    <property type="match status" value="1"/>
</dbReference>
<dbReference type="PANTHER" id="PTHR42864:SF2">
    <property type="entry name" value="LIGHT-INDEPENDENT PROTOCHLOROPHYLLIDE REDUCTASE IRON-SULFUR ATP-BINDING PROTEIN"/>
    <property type="match status" value="1"/>
</dbReference>
<dbReference type="Pfam" id="PF00142">
    <property type="entry name" value="Fer4_NifH"/>
    <property type="match status" value="1"/>
</dbReference>
<dbReference type="PIRSF" id="PIRSF000363">
    <property type="entry name" value="Nitrogenase_iron"/>
    <property type="match status" value="1"/>
</dbReference>
<dbReference type="PRINTS" id="PR00091">
    <property type="entry name" value="NITROGNASEII"/>
</dbReference>
<dbReference type="SUPFAM" id="SSF52540">
    <property type="entry name" value="P-loop containing nucleoside triphosphate hydrolases"/>
    <property type="match status" value="1"/>
</dbReference>
<dbReference type="PROSITE" id="PS00746">
    <property type="entry name" value="NIFH_FRXC_1"/>
    <property type="match status" value="1"/>
</dbReference>
<dbReference type="PROSITE" id="PS00692">
    <property type="entry name" value="NIFH_FRXC_2"/>
    <property type="match status" value="1"/>
</dbReference>
<dbReference type="PROSITE" id="PS51026">
    <property type="entry name" value="NIFH_FRXC_3"/>
    <property type="match status" value="1"/>
</dbReference>
<name>NIFH1_AZOCH</name>
<protein>
    <recommendedName>
        <fullName>Nitrogenase iron protein 1</fullName>
        <ecNumber>1.18.6.1</ecNumber>
    </recommendedName>
    <alternativeName>
        <fullName>Nitrogenase Fe protein 1</fullName>
    </alternativeName>
    <alternativeName>
        <fullName>Nitrogenase component II</fullName>
    </alternativeName>
    <alternativeName>
        <fullName>Nitrogenase reductase</fullName>
    </alternativeName>
</protein>
<comment type="function">
    <text>The key enzymatic reactions in nitrogen fixation are catalyzed by the nitrogenase complex, which has 2 components: the iron protein (component 2) and a component 1 which is either a molybdenum-iron protein, a vanadium-iron, or an iron-iron protein.</text>
</comment>
<comment type="catalytic activity">
    <reaction>
        <text>N2 + 8 reduced [2Fe-2S]-[ferredoxin] + 16 ATP + 16 H2O = H2 + 8 oxidized [2Fe-2S]-[ferredoxin] + 2 NH4(+) + 16 ADP + 16 phosphate + 6 H(+)</text>
        <dbReference type="Rhea" id="RHEA:21448"/>
        <dbReference type="Rhea" id="RHEA-COMP:10000"/>
        <dbReference type="Rhea" id="RHEA-COMP:10001"/>
        <dbReference type="ChEBI" id="CHEBI:15377"/>
        <dbReference type="ChEBI" id="CHEBI:15378"/>
        <dbReference type="ChEBI" id="CHEBI:17997"/>
        <dbReference type="ChEBI" id="CHEBI:18276"/>
        <dbReference type="ChEBI" id="CHEBI:28938"/>
        <dbReference type="ChEBI" id="CHEBI:30616"/>
        <dbReference type="ChEBI" id="CHEBI:33737"/>
        <dbReference type="ChEBI" id="CHEBI:33738"/>
        <dbReference type="ChEBI" id="CHEBI:43474"/>
        <dbReference type="ChEBI" id="CHEBI:456216"/>
        <dbReference type="EC" id="1.18.6.1"/>
    </reaction>
</comment>
<comment type="cofactor">
    <cofactor>
        <name>[4Fe-4S] cluster</name>
        <dbReference type="ChEBI" id="CHEBI:49883"/>
    </cofactor>
    <text>Binds 1 [4Fe-4S] cluster per dimer.</text>
</comment>
<comment type="subunit">
    <text>Homodimer.</text>
</comment>
<comment type="PTM">
    <text evidence="1">The reversible ADP-ribosylation of Arg-101 inactivates the nitrogenase reductase and regulates nitrogenase activity.</text>
</comment>
<comment type="miscellaneous">
    <text>This subunit is associated with the molybdenum-iron nitrogenase component 2.</text>
</comment>
<comment type="similarity">
    <text evidence="3">Belongs to the NifH/BchL/ChlL family.</text>
</comment>
<keyword id="KW-0004">4Fe-4S</keyword>
<keyword id="KW-0013">ADP-ribosylation</keyword>
<keyword id="KW-0067">ATP-binding</keyword>
<keyword id="KW-0408">Iron</keyword>
<keyword id="KW-0411">Iron-sulfur</keyword>
<keyword id="KW-0479">Metal-binding</keyword>
<keyword id="KW-0535">Nitrogen fixation</keyword>
<keyword id="KW-0547">Nucleotide-binding</keyword>
<keyword id="KW-0560">Oxidoreductase</keyword>